<protein>
    <recommendedName>
        <fullName evidence="1">Polyribonucleotide nucleotidyltransferase 3</fullName>
        <ecNumber evidence="1">2.7.7.8</ecNumber>
    </recommendedName>
    <alternativeName>
        <fullName evidence="1">Polynucleotide phosphorylase 3</fullName>
        <shortName evidence="1">PNPase 3</shortName>
    </alternativeName>
</protein>
<feature type="chain" id="PRO_0000329493" description="Polyribonucleotide nucleotidyltransferase 3">
    <location>
        <begin position="1"/>
        <end position="702"/>
    </location>
</feature>
<feature type="domain" description="KH" evidence="1">
    <location>
        <begin position="550"/>
        <end position="609"/>
    </location>
</feature>
<feature type="domain" description="S1 motif" evidence="1">
    <location>
        <begin position="619"/>
        <end position="687"/>
    </location>
</feature>
<feature type="binding site" evidence="1">
    <location>
        <position position="483"/>
    </location>
    <ligand>
        <name>Mg(2+)</name>
        <dbReference type="ChEBI" id="CHEBI:18420"/>
    </ligand>
</feature>
<feature type="binding site" evidence="1">
    <location>
        <position position="489"/>
    </location>
    <ligand>
        <name>Mg(2+)</name>
        <dbReference type="ChEBI" id="CHEBI:18420"/>
    </ligand>
</feature>
<evidence type="ECO:0000255" key="1">
    <source>
        <dbReference type="HAMAP-Rule" id="MF_01595"/>
    </source>
</evidence>
<name>PNP3_ALKMQ</name>
<sequence length="702" mass="77005">MVKTFEMKLGGRPFVVEIGKVAELAQGSCMIKYGDTTVLVTACASKEPKEGLDFFPLSCDYEEKLYAVGKIPGGFIKRESRPSEKATLTARLIDRPIRPLFPKGYHNDVQVIATVLSMDQDCPPDISAMIGSSIALSVSNIPFMGPTASVSVGMIDGEYIVNPTSKQKEDSTLELIVSGTKNAIMMIEAGANELTEAQILDAIMFAHEEIKKIVAFIENIVSEVGKPKSEVIAKQMDSNLLTEVVIFLDTKLANAIKTFDKTERNENIQAVSAEALDYFEEKYEGRSKEVHDILSMLIKVETRKMITSEGIRPDNRKLDEIRPISTQVGILPRAHGTGLFNRGETQVLTITTLGDLRDAQRIDGIGEEDEKRYMHHYNFPPYSVGETRFMRGPSRREIGHGALVERALLPMIPSKEDFPYAIRLVSEVLTCNGSSSQASVCGSTLSLMDAGVPIKRMVAGIAMGLIKEDDQVVILSDIQGMEDALGDMDLKVAGTEEGITAMQMDIKIAGIDRGIMETALEQARIGRLHILNKMKESITSPRIELSSYAPKVTQIKVHPDKVREVIGAGGKVINKIIDETGCKITIENDGTIYVAAPDQESSRRAVEMIELIVKDPVVGEVYTGKVIKIMDFGAFVEILPGKEGLVHISNLAHERVTKVTDVLAEGDLIEVKLMEINPQGKIGLSRKALLPKPETKSETQSE</sequence>
<organism>
    <name type="scientific">Alkaliphilus metalliredigens (strain QYMF)</name>
    <dbReference type="NCBI Taxonomy" id="293826"/>
    <lineage>
        <taxon>Bacteria</taxon>
        <taxon>Bacillati</taxon>
        <taxon>Bacillota</taxon>
        <taxon>Clostridia</taxon>
        <taxon>Peptostreptococcales</taxon>
        <taxon>Natronincolaceae</taxon>
        <taxon>Alkaliphilus</taxon>
    </lineage>
</organism>
<reference key="1">
    <citation type="journal article" date="2016" name="Genome Announc.">
        <title>Complete genome sequence of Alkaliphilus metalliredigens strain QYMF, an alkaliphilic and metal-reducing bacterium isolated from borax-contaminated leachate ponds.</title>
        <authorList>
            <person name="Hwang C."/>
            <person name="Copeland A."/>
            <person name="Lucas S."/>
            <person name="Lapidus A."/>
            <person name="Barry K."/>
            <person name="Detter J.C."/>
            <person name="Glavina Del Rio T."/>
            <person name="Hammon N."/>
            <person name="Israni S."/>
            <person name="Dalin E."/>
            <person name="Tice H."/>
            <person name="Pitluck S."/>
            <person name="Chertkov O."/>
            <person name="Brettin T."/>
            <person name="Bruce D."/>
            <person name="Han C."/>
            <person name="Schmutz J."/>
            <person name="Larimer F."/>
            <person name="Land M.L."/>
            <person name="Hauser L."/>
            <person name="Kyrpides N."/>
            <person name="Mikhailova N."/>
            <person name="Ye Q."/>
            <person name="Zhou J."/>
            <person name="Richardson P."/>
            <person name="Fields M.W."/>
        </authorList>
    </citation>
    <scope>NUCLEOTIDE SEQUENCE [LARGE SCALE GENOMIC DNA]</scope>
    <source>
        <strain>QYMF</strain>
    </source>
</reference>
<gene>
    <name evidence="1" type="primary">pnp3</name>
    <name type="ordered locus">Amet_1737</name>
</gene>
<comment type="function">
    <text evidence="1">Involved in mRNA degradation. Catalyzes the phosphorolysis of single-stranded polyribonucleotides processively in the 3'- to 5'-direction.</text>
</comment>
<comment type="catalytic activity">
    <reaction evidence="1">
        <text>RNA(n+1) + phosphate = RNA(n) + a ribonucleoside 5'-diphosphate</text>
        <dbReference type="Rhea" id="RHEA:22096"/>
        <dbReference type="Rhea" id="RHEA-COMP:14527"/>
        <dbReference type="Rhea" id="RHEA-COMP:17342"/>
        <dbReference type="ChEBI" id="CHEBI:43474"/>
        <dbReference type="ChEBI" id="CHEBI:57930"/>
        <dbReference type="ChEBI" id="CHEBI:140395"/>
        <dbReference type="EC" id="2.7.7.8"/>
    </reaction>
</comment>
<comment type="cofactor">
    <cofactor evidence="1">
        <name>Mg(2+)</name>
        <dbReference type="ChEBI" id="CHEBI:18420"/>
    </cofactor>
</comment>
<comment type="subcellular location">
    <subcellularLocation>
        <location evidence="1">Cytoplasm</location>
    </subcellularLocation>
</comment>
<comment type="similarity">
    <text evidence="1">Belongs to the polyribonucleotide nucleotidyltransferase family.</text>
</comment>
<keyword id="KW-0963">Cytoplasm</keyword>
<keyword id="KW-0460">Magnesium</keyword>
<keyword id="KW-0479">Metal-binding</keyword>
<keyword id="KW-0548">Nucleotidyltransferase</keyword>
<keyword id="KW-1185">Reference proteome</keyword>
<keyword id="KW-0694">RNA-binding</keyword>
<keyword id="KW-0808">Transferase</keyword>
<dbReference type="EC" id="2.7.7.8" evidence="1"/>
<dbReference type="EMBL" id="CP000724">
    <property type="protein sequence ID" value="ABR47913.1"/>
    <property type="molecule type" value="Genomic_DNA"/>
</dbReference>
<dbReference type="RefSeq" id="WP_012062951.1">
    <property type="nucleotide sequence ID" value="NC_009633.1"/>
</dbReference>
<dbReference type="SMR" id="A6TNZ5"/>
<dbReference type="STRING" id="293826.Amet_1737"/>
<dbReference type="KEGG" id="amt:Amet_1737"/>
<dbReference type="eggNOG" id="COG1185">
    <property type="taxonomic scope" value="Bacteria"/>
</dbReference>
<dbReference type="HOGENOM" id="CLU_004217_2_2_9"/>
<dbReference type="OrthoDB" id="9804305at2"/>
<dbReference type="Proteomes" id="UP000001572">
    <property type="component" value="Chromosome"/>
</dbReference>
<dbReference type="GO" id="GO:0005829">
    <property type="term" value="C:cytosol"/>
    <property type="evidence" value="ECO:0007669"/>
    <property type="project" value="TreeGrafter"/>
</dbReference>
<dbReference type="GO" id="GO:0000175">
    <property type="term" value="F:3'-5'-RNA exonuclease activity"/>
    <property type="evidence" value="ECO:0007669"/>
    <property type="project" value="TreeGrafter"/>
</dbReference>
<dbReference type="GO" id="GO:0000287">
    <property type="term" value="F:magnesium ion binding"/>
    <property type="evidence" value="ECO:0007669"/>
    <property type="project" value="UniProtKB-UniRule"/>
</dbReference>
<dbReference type="GO" id="GO:0004654">
    <property type="term" value="F:polyribonucleotide nucleotidyltransferase activity"/>
    <property type="evidence" value="ECO:0007669"/>
    <property type="project" value="UniProtKB-UniRule"/>
</dbReference>
<dbReference type="GO" id="GO:0003723">
    <property type="term" value="F:RNA binding"/>
    <property type="evidence" value="ECO:0007669"/>
    <property type="project" value="UniProtKB-UniRule"/>
</dbReference>
<dbReference type="GO" id="GO:0006402">
    <property type="term" value="P:mRNA catabolic process"/>
    <property type="evidence" value="ECO:0007669"/>
    <property type="project" value="UniProtKB-UniRule"/>
</dbReference>
<dbReference type="GO" id="GO:0006396">
    <property type="term" value="P:RNA processing"/>
    <property type="evidence" value="ECO:0007669"/>
    <property type="project" value="InterPro"/>
</dbReference>
<dbReference type="CDD" id="cd02393">
    <property type="entry name" value="KH-I_PNPase"/>
    <property type="match status" value="1"/>
</dbReference>
<dbReference type="CDD" id="cd11363">
    <property type="entry name" value="RNase_PH_PNPase_1"/>
    <property type="match status" value="1"/>
</dbReference>
<dbReference type="CDD" id="cd11364">
    <property type="entry name" value="RNase_PH_PNPase_2"/>
    <property type="match status" value="1"/>
</dbReference>
<dbReference type="CDD" id="cd04472">
    <property type="entry name" value="S1_PNPase"/>
    <property type="match status" value="1"/>
</dbReference>
<dbReference type="FunFam" id="2.40.50.140:FF:000023">
    <property type="entry name" value="Polyribonucleotide nucleotidyltransferase"/>
    <property type="match status" value="1"/>
</dbReference>
<dbReference type="FunFam" id="3.30.1370.10:FF:000001">
    <property type="entry name" value="Polyribonucleotide nucleotidyltransferase"/>
    <property type="match status" value="1"/>
</dbReference>
<dbReference type="FunFam" id="3.30.230.70:FF:000001">
    <property type="entry name" value="Polyribonucleotide nucleotidyltransferase"/>
    <property type="match status" value="1"/>
</dbReference>
<dbReference type="FunFam" id="3.30.230.70:FF:000002">
    <property type="entry name" value="Polyribonucleotide nucleotidyltransferase"/>
    <property type="match status" value="1"/>
</dbReference>
<dbReference type="Gene3D" id="3.30.230.70">
    <property type="entry name" value="GHMP Kinase, N-terminal domain"/>
    <property type="match status" value="2"/>
</dbReference>
<dbReference type="Gene3D" id="3.30.1370.10">
    <property type="entry name" value="K Homology domain, type 1"/>
    <property type="match status" value="1"/>
</dbReference>
<dbReference type="Gene3D" id="2.40.50.140">
    <property type="entry name" value="Nucleic acid-binding proteins"/>
    <property type="match status" value="1"/>
</dbReference>
<dbReference type="HAMAP" id="MF_01595">
    <property type="entry name" value="PNPase"/>
    <property type="match status" value="1"/>
</dbReference>
<dbReference type="InterPro" id="IPR001247">
    <property type="entry name" value="ExoRNase_PH_dom1"/>
</dbReference>
<dbReference type="InterPro" id="IPR015847">
    <property type="entry name" value="ExoRNase_PH_dom2"/>
</dbReference>
<dbReference type="InterPro" id="IPR036345">
    <property type="entry name" value="ExoRNase_PH_dom2_sf"/>
</dbReference>
<dbReference type="InterPro" id="IPR004087">
    <property type="entry name" value="KH_dom"/>
</dbReference>
<dbReference type="InterPro" id="IPR004088">
    <property type="entry name" value="KH_dom_type_1"/>
</dbReference>
<dbReference type="InterPro" id="IPR036612">
    <property type="entry name" value="KH_dom_type_1_sf"/>
</dbReference>
<dbReference type="InterPro" id="IPR012340">
    <property type="entry name" value="NA-bd_OB-fold"/>
</dbReference>
<dbReference type="InterPro" id="IPR012162">
    <property type="entry name" value="PNPase"/>
</dbReference>
<dbReference type="InterPro" id="IPR027408">
    <property type="entry name" value="PNPase/RNase_PH_dom_sf"/>
</dbReference>
<dbReference type="InterPro" id="IPR015848">
    <property type="entry name" value="PNPase_PH_RNA-bd_bac/org-type"/>
</dbReference>
<dbReference type="InterPro" id="IPR036456">
    <property type="entry name" value="PNPase_PH_RNA-bd_sf"/>
</dbReference>
<dbReference type="InterPro" id="IPR020568">
    <property type="entry name" value="Ribosomal_Su5_D2-typ_SF"/>
</dbReference>
<dbReference type="InterPro" id="IPR003029">
    <property type="entry name" value="S1_domain"/>
</dbReference>
<dbReference type="NCBIfam" id="TIGR03591">
    <property type="entry name" value="polynuc_phos"/>
    <property type="match status" value="1"/>
</dbReference>
<dbReference type="NCBIfam" id="NF008805">
    <property type="entry name" value="PRK11824.1"/>
    <property type="match status" value="1"/>
</dbReference>
<dbReference type="PANTHER" id="PTHR11252">
    <property type="entry name" value="POLYRIBONUCLEOTIDE NUCLEOTIDYLTRANSFERASE"/>
    <property type="match status" value="1"/>
</dbReference>
<dbReference type="PANTHER" id="PTHR11252:SF0">
    <property type="entry name" value="POLYRIBONUCLEOTIDE NUCLEOTIDYLTRANSFERASE 1, MITOCHONDRIAL"/>
    <property type="match status" value="1"/>
</dbReference>
<dbReference type="Pfam" id="PF00013">
    <property type="entry name" value="KH_1"/>
    <property type="match status" value="1"/>
</dbReference>
<dbReference type="Pfam" id="PF03726">
    <property type="entry name" value="PNPase"/>
    <property type="match status" value="1"/>
</dbReference>
<dbReference type="Pfam" id="PF01138">
    <property type="entry name" value="RNase_PH"/>
    <property type="match status" value="2"/>
</dbReference>
<dbReference type="Pfam" id="PF03725">
    <property type="entry name" value="RNase_PH_C"/>
    <property type="match status" value="2"/>
</dbReference>
<dbReference type="Pfam" id="PF00575">
    <property type="entry name" value="S1"/>
    <property type="match status" value="1"/>
</dbReference>
<dbReference type="PIRSF" id="PIRSF005499">
    <property type="entry name" value="PNPase"/>
    <property type="match status" value="1"/>
</dbReference>
<dbReference type="SMART" id="SM00322">
    <property type="entry name" value="KH"/>
    <property type="match status" value="1"/>
</dbReference>
<dbReference type="SMART" id="SM00316">
    <property type="entry name" value="S1"/>
    <property type="match status" value="1"/>
</dbReference>
<dbReference type="SUPFAM" id="SSF54791">
    <property type="entry name" value="Eukaryotic type KH-domain (KH-domain type I)"/>
    <property type="match status" value="1"/>
</dbReference>
<dbReference type="SUPFAM" id="SSF50249">
    <property type="entry name" value="Nucleic acid-binding proteins"/>
    <property type="match status" value="1"/>
</dbReference>
<dbReference type="SUPFAM" id="SSF46915">
    <property type="entry name" value="Polynucleotide phosphorylase/guanosine pentaphosphate synthase (PNPase/GPSI), domain 3"/>
    <property type="match status" value="1"/>
</dbReference>
<dbReference type="SUPFAM" id="SSF55666">
    <property type="entry name" value="Ribonuclease PH domain 2-like"/>
    <property type="match status" value="2"/>
</dbReference>
<dbReference type="SUPFAM" id="SSF54211">
    <property type="entry name" value="Ribosomal protein S5 domain 2-like"/>
    <property type="match status" value="2"/>
</dbReference>
<dbReference type="PROSITE" id="PS50084">
    <property type="entry name" value="KH_TYPE_1"/>
    <property type="match status" value="1"/>
</dbReference>
<dbReference type="PROSITE" id="PS50126">
    <property type="entry name" value="S1"/>
    <property type="match status" value="1"/>
</dbReference>
<accession>A6TNZ5</accession>
<proteinExistence type="inferred from homology"/>